<comment type="function">
    <text evidence="1">This is one of the proteins that bind and probably mediate the attachment of the 5S RNA into the large ribosomal subunit, where it forms part of the central protuberance.</text>
</comment>
<comment type="subunit">
    <text evidence="1">Part of the 50S ribosomal subunit; part of the 5S rRNA/L5/L18/L25 subcomplex. Contacts the 5S and 23S rRNAs.</text>
</comment>
<comment type="similarity">
    <text evidence="1">Belongs to the universal ribosomal protein uL18 family.</text>
</comment>
<feature type="chain" id="PRO_0000131319" description="Large ribosomal subunit protein uL18">
    <location>
        <begin position="1"/>
        <end position="122"/>
    </location>
</feature>
<feature type="region of interest" description="Disordered" evidence="2">
    <location>
        <begin position="1"/>
        <end position="26"/>
    </location>
</feature>
<feature type="compositionally biased region" description="Basic residues" evidence="2">
    <location>
        <begin position="1"/>
        <end position="19"/>
    </location>
</feature>
<protein>
    <recommendedName>
        <fullName evidence="1">Large ribosomal subunit protein uL18</fullName>
    </recommendedName>
    <alternativeName>
        <fullName evidence="3">50S ribosomal protein L18</fullName>
    </alternativeName>
</protein>
<evidence type="ECO:0000255" key="1">
    <source>
        <dbReference type="HAMAP-Rule" id="MF_01337"/>
    </source>
</evidence>
<evidence type="ECO:0000256" key="2">
    <source>
        <dbReference type="SAM" id="MobiDB-lite"/>
    </source>
</evidence>
<evidence type="ECO:0000305" key="3"/>
<dbReference type="EMBL" id="AE017126">
    <property type="protein sequence ID" value="AAQ00741.1"/>
    <property type="molecule type" value="Genomic_DNA"/>
</dbReference>
<dbReference type="RefSeq" id="NP_876088.1">
    <property type="nucleotide sequence ID" value="NC_005042.1"/>
</dbReference>
<dbReference type="RefSeq" id="WP_011125846.1">
    <property type="nucleotide sequence ID" value="NC_005042.1"/>
</dbReference>
<dbReference type="SMR" id="Q7V9X7"/>
<dbReference type="STRING" id="167539.Pro_1697"/>
<dbReference type="EnsemblBacteria" id="AAQ00741">
    <property type="protein sequence ID" value="AAQ00741"/>
    <property type="gene ID" value="Pro_1697"/>
</dbReference>
<dbReference type="KEGG" id="pma:Pro_1697"/>
<dbReference type="PATRIC" id="fig|167539.5.peg.1792"/>
<dbReference type="eggNOG" id="COG0256">
    <property type="taxonomic scope" value="Bacteria"/>
</dbReference>
<dbReference type="HOGENOM" id="CLU_098841_0_1_3"/>
<dbReference type="OrthoDB" id="9810939at2"/>
<dbReference type="Proteomes" id="UP000001420">
    <property type="component" value="Chromosome"/>
</dbReference>
<dbReference type="GO" id="GO:0022625">
    <property type="term" value="C:cytosolic large ribosomal subunit"/>
    <property type="evidence" value="ECO:0007669"/>
    <property type="project" value="TreeGrafter"/>
</dbReference>
<dbReference type="GO" id="GO:0008097">
    <property type="term" value="F:5S rRNA binding"/>
    <property type="evidence" value="ECO:0007669"/>
    <property type="project" value="TreeGrafter"/>
</dbReference>
<dbReference type="GO" id="GO:0003735">
    <property type="term" value="F:structural constituent of ribosome"/>
    <property type="evidence" value="ECO:0007669"/>
    <property type="project" value="InterPro"/>
</dbReference>
<dbReference type="GO" id="GO:0006412">
    <property type="term" value="P:translation"/>
    <property type="evidence" value="ECO:0007669"/>
    <property type="project" value="UniProtKB-UniRule"/>
</dbReference>
<dbReference type="CDD" id="cd00432">
    <property type="entry name" value="Ribosomal_L18_L5e"/>
    <property type="match status" value="1"/>
</dbReference>
<dbReference type="FunFam" id="3.30.420.100:FF:000001">
    <property type="entry name" value="50S ribosomal protein L18"/>
    <property type="match status" value="1"/>
</dbReference>
<dbReference type="Gene3D" id="3.30.420.100">
    <property type="match status" value="1"/>
</dbReference>
<dbReference type="HAMAP" id="MF_01337_B">
    <property type="entry name" value="Ribosomal_uL18_B"/>
    <property type="match status" value="1"/>
</dbReference>
<dbReference type="InterPro" id="IPR004389">
    <property type="entry name" value="Ribosomal_uL18_bac-type"/>
</dbReference>
<dbReference type="InterPro" id="IPR005484">
    <property type="entry name" value="Ribosomal_uL18_bac/euk"/>
</dbReference>
<dbReference type="NCBIfam" id="TIGR00060">
    <property type="entry name" value="L18_bact"/>
    <property type="match status" value="1"/>
</dbReference>
<dbReference type="PANTHER" id="PTHR12899">
    <property type="entry name" value="39S RIBOSOMAL PROTEIN L18, MITOCHONDRIAL"/>
    <property type="match status" value="1"/>
</dbReference>
<dbReference type="PANTHER" id="PTHR12899:SF3">
    <property type="entry name" value="LARGE RIBOSOMAL SUBUNIT PROTEIN UL18M"/>
    <property type="match status" value="1"/>
</dbReference>
<dbReference type="Pfam" id="PF00861">
    <property type="entry name" value="Ribosomal_L18p"/>
    <property type="match status" value="1"/>
</dbReference>
<dbReference type="SUPFAM" id="SSF53137">
    <property type="entry name" value="Translational machinery components"/>
    <property type="match status" value="1"/>
</dbReference>
<proteinExistence type="inferred from homology"/>
<gene>
    <name evidence="1" type="primary">rplR</name>
    <name evidence="1" type="synonym">rpl18</name>
    <name type="ordered locus">Pro_1697</name>
</gene>
<reference key="1">
    <citation type="journal article" date="2003" name="Proc. Natl. Acad. Sci. U.S.A.">
        <title>Genome sequence of the cyanobacterium Prochlorococcus marinus SS120, a nearly minimal oxyphototrophic genome.</title>
        <authorList>
            <person name="Dufresne A."/>
            <person name="Salanoubat M."/>
            <person name="Partensky F."/>
            <person name="Artiguenave F."/>
            <person name="Axmann I.M."/>
            <person name="Barbe V."/>
            <person name="Duprat S."/>
            <person name="Galperin M.Y."/>
            <person name="Koonin E.V."/>
            <person name="Le Gall F."/>
            <person name="Makarova K.S."/>
            <person name="Ostrowski M."/>
            <person name="Oztas S."/>
            <person name="Robert C."/>
            <person name="Rogozin I.B."/>
            <person name="Scanlan D.J."/>
            <person name="Tandeau de Marsac N."/>
            <person name="Weissenbach J."/>
            <person name="Wincker P."/>
            <person name="Wolf Y.I."/>
            <person name="Hess W.R."/>
        </authorList>
    </citation>
    <scope>NUCLEOTIDE SEQUENCE [LARGE SCALE GENOMIC DNA]</scope>
    <source>
        <strain>SARG / CCMP1375 / SS120</strain>
    </source>
</reference>
<accession>Q7V9X7</accession>
<organism>
    <name type="scientific">Prochlorococcus marinus (strain SARG / CCMP1375 / SS120)</name>
    <dbReference type="NCBI Taxonomy" id="167539"/>
    <lineage>
        <taxon>Bacteria</taxon>
        <taxon>Bacillati</taxon>
        <taxon>Cyanobacteriota</taxon>
        <taxon>Cyanophyceae</taxon>
        <taxon>Synechococcales</taxon>
        <taxon>Prochlorococcaceae</taxon>
        <taxon>Prochlorococcus</taxon>
    </lineage>
</organism>
<name>RL18_PROMA</name>
<sequence>MSTLSRKQKTQKRHKRLRRNLSGTDQRPRLAVFRSNNHIYAQVIDDVAQNTLCAASTLEKEFLSNSKVNASTCAASTAVGEMLAKRALGKGIKQVVFDRGGSLYHGRVKALAEAARQAGLTF</sequence>
<keyword id="KW-1185">Reference proteome</keyword>
<keyword id="KW-0687">Ribonucleoprotein</keyword>
<keyword id="KW-0689">Ribosomal protein</keyword>
<keyword id="KW-0694">RNA-binding</keyword>
<keyword id="KW-0699">rRNA-binding</keyword>